<organism>
    <name type="scientific">Escherichia coli O157:H7 (strain EC4115 / EHEC)</name>
    <dbReference type="NCBI Taxonomy" id="444450"/>
    <lineage>
        <taxon>Bacteria</taxon>
        <taxon>Pseudomonadati</taxon>
        <taxon>Pseudomonadota</taxon>
        <taxon>Gammaproteobacteria</taxon>
        <taxon>Enterobacterales</taxon>
        <taxon>Enterobacteriaceae</taxon>
        <taxon>Escherichia</taxon>
    </lineage>
</organism>
<sequence length="155" mass="17277">MSEQNNTEMTFQIQRIYTKDISFEAPNAPHVFQKDWQPEVKLDLDTASSQLADDVYEVVLRVTVTASLGEETAFLCEVQQGGIFSIAGIEGTQMAHCLGAYCPNILFPYARECITSMVSRGTFPQLNLAPVNFDALFMNYLQQQAGEGTEEHQDA</sequence>
<feature type="chain" id="PRO_1000195320" description="Protein-export protein SecB">
    <location>
        <begin position="1"/>
        <end position="155"/>
    </location>
</feature>
<accession>B5YWB1</accession>
<name>SECB_ECO5E</name>
<comment type="function">
    <text evidence="1">One of the proteins required for the normal export of preproteins out of the cell cytoplasm. It is a molecular chaperone that binds to a subset of precursor proteins, maintaining them in a translocation-competent state. It also specifically binds to its receptor SecA.</text>
</comment>
<comment type="subunit">
    <text evidence="1">Homotetramer, a dimer of dimers. One homotetramer interacts with 1 SecA dimer.</text>
</comment>
<comment type="subcellular location">
    <subcellularLocation>
        <location evidence="1">Cytoplasm</location>
    </subcellularLocation>
</comment>
<comment type="similarity">
    <text evidence="1">Belongs to the SecB family.</text>
</comment>
<protein>
    <recommendedName>
        <fullName evidence="1">Protein-export protein SecB</fullName>
    </recommendedName>
</protein>
<dbReference type="EMBL" id="CP001164">
    <property type="protein sequence ID" value="ACI37548.1"/>
    <property type="molecule type" value="Genomic_DNA"/>
</dbReference>
<dbReference type="RefSeq" id="WP_000003377.1">
    <property type="nucleotide sequence ID" value="NC_011353.1"/>
</dbReference>
<dbReference type="SMR" id="B5YWB1"/>
<dbReference type="GeneID" id="86944403"/>
<dbReference type="KEGG" id="ecf:ECH74115_4982"/>
<dbReference type="HOGENOM" id="CLU_111574_1_0_6"/>
<dbReference type="GO" id="GO:0005737">
    <property type="term" value="C:cytoplasm"/>
    <property type="evidence" value="ECO:0007669"/>
    <property type="project" value="UniProtKB-SubCell"/>
</dbReference>
<dbReference type="GO" id="GO:0051082">
    <property type="term" value="F:unfolded protein binding"/>
    <property type="evidence" value="ECO:0007669"/>
    <property type="project" value="InterPro"/>
</dbReference>
<dbReference type="GO" id="GO:0006457">
    <property type="term" value="P:protein folding"/>
    <property type="evidence" value="ECO:0007669"/>
    <property type="project" value="UniProtKB-UniRule"/>
</dbReference>
<dbReference type="GO" id="GO:0051262">
    <property type="term" value="P:protein tetramerization"/>
    <property type="evidence" value="ECO:0007669"/>
    <property type="project" value="InterPro"/>
</dbReference>
<dbReference type="GO" id="GO:0015031">
    <property type="term" value="P:protein transport"/>
    <property type="evidence" value="ECO:0007669"/>
    <property type="project" value="UniProtKB-UniRule"/>
</dbReference>
<dbReference type="CDD" id="cd00557">
    <property type="entry name" value="Translocase_SecB"/>
    <property type="match status" value="1"/>
</dbReference>
<dbReference type="FunFam" id="3.10.420.10:FF:000001">
    <property type="entry name" value="Protein-export chaperone SecB"/>
    <property type="match status" value="1"/>
</dbReference>
<dbReference type="Gene3D" id="3.10.420.10">
    <property type="entry name" value="SecB-like"/>
    <property type="match status" value="1"/>
</dbReference>
<dbReference type="HAMAP" id="MF_00821">
    <property type="entry name" value="SecB"/>
    <property type="match status" value="1"/>
</dbReference>
<dbReference type="InterPro" id="IPR003708">
    <property type="entry name" value="SecB"/>
</dbReference>
<dbReference type="InterPro" id="IPR035958">
    <property type="entry name" value="SecB-like_sf"/>
</dbReference>
<dbReference type="NCBIfam" id="NF004390">
    <property type="entry name" value="PRK05751.1-1"/>
    <property type="match status" value="1"/>
</dbReference>
<dbReference type="NCBIfam" id="NF004393">
    <property type="entry name" value="PRK05751.1-4"/>
    <property type="match status" value="1"/>
</dbReference>
<dbReference type="NCBIfam" id="TIGR00809">
    <property type="entry name" value="secB"/>
    <property type="match status" value="1"/>
</dbReference>
<dbReference type="PANTHER" id="PTHR36918">
    <property type="match status" value="1"/>
</dbReference>
<dbReference type="PANTHER" id="PTHR36918:SF1">
    <property type="entry name" value="PROTEIN-EXPORT PROTEIN SECB"/>
    <property type="match status" value="1"/>
</dbReference>
<dbReference type="Pfam" id="PF02556">
    <property type="entry name" value="SecB"/>
    <property type="match status" value="1"/>
</dbReference>
<dbReference type="PRINTS" id="PR01594">
    <property type="entry name" value="SECBCHAPRONE"/>
</dbReference>
<dbReference type="SUPFAM" id="SSF54611">
    <property type="entry name" value="SecB-like"/>
    <property type="match status" value="1"/>
</dbReference>
<gene>
    <name evidence="1" type="primary">secB</name>
    <name type="ordered locus">ECH74115_4982</name>
</gene>
<keyword id="KW-0143">Chaperone</keyword>
<keyword id="KW-0963">Cytoplasm</keyword>
<keyword id="KW-0653">Protein transport</keyword>
<keyword id="KW-0811">Translocation</keyword>
<keyword id="KW-0813">Transport</keyword>
<proteinExistence type="inferred from homology"/>
<evidence type="ECO:0000255" key="1">
    <source>
        <dbReference type="HAMAP-Rule" id="MF_00821"/>
    </source>
</evidence>
<reference key="1">
    <citation type="journal article" date="2011" name="Proc. Natl. Acad. Sci. U.S.A.">
        <title>Genomic anatomy of Escherichia coli O157:H7 outbreaks.</title>
        <authorList>
            <person name="Eppinger M."/>
            <person name="Mammel M.K."/>
            <person name="Leclerc J.E."/>
            <person name="Ravel J."/>
            <person name="Cebula T.A."/>
        </authorList>
    </citation>
    <scope>NUCLEOTIDE SEQUENCE [LARGE SCALE GENOMIC DNA]</scope>
    <source>
        <strain>EC4115 / EHEC</strain>
    </source>
</reference>